<organism>
    <name type="scientific">Pseudochirops cupreus</name>
    <name type="common">Coppery ringtail</name>
    <dbReference type="NCBI Taxonomy" id="37702"/>
    <lineage>
        <taxon>Eukaryota</taxon>
        <taxon>Metazoa</taxon>
        <taxon>Chordata</taxon>
        <taxon>Craniata</taxon>
        <taxon>Vertebrata</taxon>
        <taxon>Euteleostomi</taxon>
        <taxon>Mammalia</taxon>
        <taxon>Metatheria</taxon>
        <taxon>Diprotodontia</taxon>
        <taxon>Pseudocheiridae</taxon>
        <taxon>Pseudochirops</taxon>
    </lineage>
</organism>
<gene>
    <name type="primary">PRM1</name>
</gene>
<feature type="chain" id="PRO_0000191542" description="Sperm protamine P1">
    <location>
        <begin position="1"/>
        <end position="69"/>
    </location>
</feature>
<feature type="region of interest" description="Disordered" evidence="1">
    <location>
        <begin position="1"/>
        <end position="69"/>
    </location>
</feature>
<proteinExistence type="evidence at transcript level"/>
<name>HSP1_PSECU</name>
<dbReference type="EMBL" id="L35334">
    <property type="protein sequence ID" value="AAA74602.1"/>
    <property type="molecule type" value="Genomic_DNA"/>
</dbReference>
<dbReference type="GO" id="GO:0000786">
    <property type="term" value="C:nucleosome"/>
    <property type="evidence" value="ECO:0007669"/>
    <property type="project" value="UniProtKB-KW"/>
</dbReference>
<dbReference type="GO" id="GO:0005634">
    <property type="term" value="C:nucleus"/>
    <property type="evidence" value="ECO:0007669"/>
    <property type="project" value="UniProtKB-SubCell"/>
</dbReference>
<dbReference type="GO" id="GO:0003677">
    <property type="term" value="F:DNA binding"/>
    <property type="evidence" value="ECO:0007669"/>
    <property type="project" value="UniProtKB-KW"/>
</dbReference>
<dbReference type="GO" id="GO:0030261">
    <property type="term" value="P:chromosome condensation"/>
    <property type="evidence" value="ECO:0007669"/>
    <property type="project" value="UniProtKB-KW"/>
</dbReference>
<dbReference type="GO" id="GO:0035092">
    <property type="term" value="P:sperm DNA condensation"/>
    <property type="evidence" value="ECO:0007669"/>
    <property type="project" value="InterPro"/>
</dbReference>
<dbReference type="InterPro" id="IPR000221">
    <property type="entry name" value="Protamine_P1"/>
</dbReference>
<dbReference type="PROSITE" id="PS00048">
    <property type="entry name" value="PROTAMINE_P1"/>
    <property type="match status" value="1"/>
</dbReference>
<protein>
    <recommendedName>
        <fullName>Sperm protamine P1</fullName>
    </recommendedName>
</protein>
<accession>P42145</accession>
<keyword id="KW-0158">Chromosome</keyword>
<keyword id="KW-0217">Developmental protein</keyword>
<keyword id="KW-0221">Differentiation</keyword>
<keyword id="KW-0226">DNA condensation</keyword>
<keyword id="KW-0238">DNA-binding</keyword>
<keyword id="KW-0544">Nucleosome core</keyword>
<keyword id="KW-0539">Nucleus</keyword>
<keyword id="KW-0744">Spermatogenesis</keyword>
<sequence length="69" mass="9604">MARYRHSRSRSRSRYRRRRRRRRSRYRGRRRRYRRSRRRRRRGRRRGNCLGRRGYRRRRYSRRRRRRYY</sequence>
<reference key="1">
    <citation type="journal article" date="1995" name="Proc. R. Soc. B">
        <title>Molecular phylogeny and evolution of marsupial protamine P1 genes.</title>
        <authorList>
            <person name="Retief J.D."/>
            <person name="Krajewski C."/>
            <person name="Westerman M."/>
            <person name="Winkfein R.J."/>
            <person name="Dixon G.H."/>
        </authorList>
    </citation>
    <scope>NUCLEOTIDE SEQUENCE [GENOMIC DNA]</scope>
    <source>
        <tissue>Sperm</tissue>
    </source>
</reference>
<evidence type="ECO:0000256" key="1">
    <source>
        <dbReference type="SAM" id="MobiDB-lite"/>
    </source>
</evidence>
<evidence type="ECO:0000305" key="2"/>
<comment type="function">
    <text>Protamines substitute for histones in the chromatin of sperm during the haploid phase of spermatogenesis. They compact sperm DNA into a highly condensed, stable and inactive complex.</text>
</comment>
<comment type="subcellular location">
    <subcellularLocation>
        <location>Nucleus</location>
    </subcellularLocation>
    <subcellularLocation>
        <location>Chromosome</location>
    </subcellularLocation>
</comment>
<comment type="tissue specificity">
    <text>Testis.</text>
</comment>
<comment type="similarity">
    <text evidence="2">Belongs to the protamine P1 family.</text>
</comment>